<reference key="1">
    <citation type="journal article" date="2004" name="Nature">
        <title>Genome evolution in yeasts.</title>
        <authorList>
            <person name="Dujon B."/>
            <person name="Sherman D."/>
            <person name="Fischer G."/>
            <person name="Durrens P."/>
            <person name="Casaregola S."/>
            <person name="Lafontaine I."/>
            <person name="de Montigny J."/>
            <person name="Marck C."/>
            <person name="Neuveglise C."/>
            <person name="Talla E."/>
            <person name="Goffard N."/>
            <person name="Frangeul L."/>
            <person name="Aigle M."/>
            <person name="Anthouard V."/>
            <person name="Babour A."/>
            <person name="Barbe V."/>
            <person name="Barnay S."/>
            <person name="Blanchin S."/>
            <person name="Beckerich J.-M."/>
            <person name="Beyne E."/>
            <person name="Bleykasten C."/>
            <person name="Boisrame A."/>
            <person name="Boyer J."/>
            <person name="Cattolico L."/>
            <person name="Confanioleri F."/>
            <person name="de Daruvar A."/>
            <person name="Despons L."/>
            <person name="Fabre E."/>
            <person name="Fairhead C."/>
            <person name="Ferry-Dumazet H."/>
            <person name="Groppi A."/>
            <person name="Hantraye F."/>
            <person name="Hennequin C."/>
            <person name="Jauniaux N."/>
            <person name="Joyet P."/>
            <person name="Kachouri R."/>
            <person name="Kerrest A."/>
            <person name="Koszul R."/>
            <person name="Lemaire M."/>
            <person name="Lesur I."/>
            <person name="Ma L."/>
            <person name="Muller H."/>
            <person name="Nicaud J.-M."/>
            <person name="Nikolski M."/>
            <person name="Oztas S."/>
            <person name="Ozier-Kalogeropoulos O."/>
            <person name="Pellenz S."/>
            <person name="Potier S."/>
            <person name="Richard G.-F."/>
            <person name="Straub M.-L."/>
            <person name="Suleau A."/>
            <person name="Swennen D."/>
            <person name="Tekaia F."/>
            <person name="Wesolowski-Louvel M."/>
            <person name="Westhof E."/>
            <person name="Wirth B."/>
            <person name="Zeniou-Meyer M."/>
            <person name="Zivanovic Y."/>
            <person name="Bolotin-Fukuhara M."/>
            <person name="Thierry A."/>
            <person name="Bouchier C."/>
            <person name="Caudron B."/>
            <person name="Scarpelli C."/>
            <person name="Gaillardin C."/>
            <person name="Weissenbach J."/>
            <person name="Wincker P."/>
            <person name="Souciet J.-L."/>
        </authorList>
    </citation>
    <scope>NUCLEOTIDE SEQUENCE [LARGE SCALE GENOMIC DNA]</scope>
    <source>
        <strain>ATCC 36239 / CBS 767 / BCRC 21394 / JCM 1990 / NBRC 0083 / IGC 2968</strain>
    </source>
</reference>
<sequence>MSQQYFVIDNGSYNIKAGFSNQDAPIKHQNALSKARDGLIYVGNEYLVQTNNYSGMIFKRPYDHGHLISWETEKAVWDYTFNKASPNQELDASITHLTLTETPFQLPQLSMNTDQIVFEEYGFNEYYRCAPASLVPWSNLGSSESKNNDFTLVVDSGYSGTWIVPIIYQNVYWKGVKKLPIGGAALNGLLREIISFRHYDIADEPVLINTIKEKTCFMATDFEKSLANRKKYRCEFILPDFKTTTTGFVKTKDTPIDTTGDVQSLALIDERFTIPESFYHPEIIFDNTTSSTSTIQNASFKNITDLVVECIMSCPKVTQPLLSGNIITVGGNTNLPGFTDRLRHELVKELPIDWHVQVKETEHNPDEASWFGGAQLTNDEIINNISISKKDYFEHGSNWCQKQFGFKNL</sequence>
<proteinExistence type="inferred from homology"/>
<accession>Q6BML9</accession>
<feature type="chain" id="PRO_0000089115" description="Actin-like protein ARP6">
    <location>
        <begin position="1"/>
        <end position="409"/>
    </location>
</feature>
<dbReference type="EMBL" id="CR382138">
    <property type="protein sequence ID" value="CAG88868.2"/>
    <property type="molecule type" value="Genomic_DNA"/>
</dbReference>
<dbReference type="RefSeq" id="XP_460552.2">
    <property type="nucleotide sequence ID" value="XM_460552.1"/>
</dbReference>
<dbReference type="SMR" id="Q6BML9"/>
<dbReference type="FunCoup" id="Q6BML9">
    <property type="interactions" value="349"/>
</dbReference>
<dbReference type="STRING" id="284592.Q6BML9"/>
<dbReference type="GeneID" id="2903208"/>
<dbReference type="KEGG" id="dha:DEHA2F04268g"/>
<dbReference type="VEuPathDB" id="FungiDB:DEHA2F04268g"/>
<dbReference type="eggNOG" id="KOG0680">
    <property type="taxonomic scope" value="Eukaryota"/>
</dbReference>
<dbReference type="HOGENOM" id="CLU_027965_1_1_1"/>
<dbReference type="InParanoid" id="Q6BML9"/>
<dbReference type="OMA" id="FFEEYEC"/>
<dbReference type="OrthoDB" id="6220758at2759"/>
<dbReference type="Proteomes" id="UP000000599">
    <property type="component" value="Chromosome F"/>
</dbReference>
<dbReference type="GO" id="GO:0005737">
    <property type="term" value="C:cytoplasm"/>
    <property type="evidence" value="ECO:0007669"/>
    <property type="project" value="UniProtKB-SubCell"/>
</dbReference>
<dbReference type="GO" id="GO:0005856">
    <property type="term" value="C:cytoskeleton"/>
    <property type="evidence" value="ECO:0007669"/>
    <property type="project" value="UniProtKB-SubCell"/>
</dbReference>
<dbReference type="GO" id="GO:0000812">
    <property type="term" value="C:Swr1 complex"/>
    <property type="evidence" value="ECO:0007669"/>
    <property type="project" value="EnsemblFungi"/>
</dbReference>
<dbReference type="GO" id="GO:0006338">
    <property type="term" value="P:chromatin remodeling"/>
    <property type="evidence" value="ECO:0007669"/>
    <property type="project" value="EnsemblFungi"/>
</dbReference>
<dbReference type="CDD" id="cd10210">
    <property type="entry name" value="ASKHA_NBD_Arp6"/>
    <property type="match status" value="1"/>
</dbReference>
<dbReference type="FunFam" id="3.90.640.10:FF:000014">
    <property type="entry name" value="Putative actin-related protein 6"/>
    <property type="match status" value="1"/>
</dbReference>
<dbReference type="Gene3D" id="3.30.420.40">
    <property type="match status" value="2"/>
</dbReference>
<dbReference type="Gene3D" id="3.90.640.10">
    <property type="entry name" value="Actin, Chain A, domain 4"/>
    <property type="match status" value="1"/>
</dbReference>
<dbReference type="InterPro" id="IPR004000">
    <property type="entry name" value="Actin"/>
</dbReference>
<dbReference type="InterPro" id="IPR043129">
    <property type="entry name" value="ATPase_NBD"/>
</dbReference>
<dbReference type="PANTHER" id="PTHR11937">
    <property type="entry name" value="ACTIN"/>
    <property type="match status" value="1"/>
</dbReference>
<dbReference type="Pfam" id="PF00022">
    <property type="entry name" value="Actin"/>
    <property type="match status" value="1"/>
</dbReference>
<dbReference type="SMART" id="SM00268">
    <property type="entry name" value="ACTIN"/>
    <property type="match status" value="1"/>
</dbReference>
<dbReference type="SUPFAM" id="SSF53067">
    <property type="entry name" value="Actin-like ATPase domain"/>
    <property type="match status" value="2"/>
</dbReference>
<gene>
    <name type="primary">ARP6</name>
    <name type="ordered locus">DEHA2F04268g</name>
</gene>
<keyword id="KW-0010">Activator</keyword>
<keyword id="KW-0156">Chromatin regulator</keyword>
<keyword id="KW-0963">Cytoplasm</keyword>
<keyword id="KW-0206">Cytoskeleton</keyword>
<keyword id="KW-0539">Nucleus</keyword>
<keyword id="KW-1185">Reference proteome</keyword>
<keyword id="KW-0804">Transcription</keyword>
<keyword id="KW-0805">Transcription regulation</keyword>
<name>ARP6_DEBHA</name>
<organism>
    <name type="scientific">Debaryomyces hansenii (strain ATCC 36239 / CBS 767 / BCRC 21394 / JCM 1990 / NBRC 0083 / IGC 2968)</name>
    <name type="common">Yeast</name>
    <name type="synonym">Torulaspora hansenii</name>
    <dbReference type="NCBI Taxonomy" id="284592"/>
    <lineage>
        <taxon>Eukaryota</taxon>
        <taxon>Fungi</taxon>
        <taxon>Dikarya</taxon>
        <taxon>Ascomycota</taxon>
        <taxon>Saccharomycotina</taxon>
        <taxon>Pichiomycetes</taxon>
        <taxon>Debaryomycetaceae</taxon>
        <taxon>Debaryomyces</taxon>
    </lineage>
</organism>
<comment type="function">
    <text evidence="1">Component of the SWR1 complex which mediates the ATP-dependent exchange of histone H2A for the H2A variant HZT1 leading to transcriptional regulation of selected genes by chromatin remodeling. Involved in chromosome stability (By similarity).</text>
</comment>
<comment type="subunit">
    <text evidence="1">Component of the SWR1 chromatin remodeling complex.</text>
</comment>
<comment type="subcellular location">
    <subcellularLocation>
        <location evidence="1">Cytoplasm</location>
    </subcellularLocation>
    <subcellularLocation>
        <location evidence="1">Cytoplasm</location>
        <location evidence="1">Cytoskeleton</location>
    </subcellularLocation>
    <subcellularLocation>
        <location evidence="1">Nucleus</location>
    </subcellularLocation>
</comment>
<comment type="similarity">
    <text evidence="2">Belongs to the actin family. ARP6 subfamily.</text>
</comment>
<evidence type="ECO:0000250" key="1"/>
<evidence type="ECO:0000305" key="2"/>
<protein>
    <recommendedName>
        <fullName>Actin-like protein ARP6</fullName>
    </recommendedName>
</protein>